<gene>
    <name evidence="1" type="primary">rpoA</name>
    <name type="ordered locus">lpl0395</name>
</gene>
<accession>Q5WZI7</accession>
<organism>
    <name type="scientific">Legionella pneumophila (strain Lens)</name>
    <dbReference type="NCBI Taxonomy" id="297245"/>
    <lineage>
        <taxon>Bacteria</taxon>
        <taxon>Pseudomonadati</taxon>
        <taxon>Pseudomonadota</taxon>
        <taxon>Gammaproteobacteria</taxon>
        <taxon>Legionellales</taxon>
        <taxon>Legionellaceae</taxon>
        <taxon>Legionella</taxon>
    </lineage>
</organism>
<feature type="chain" id="PRO_0000175324" description="DNA-directed RNA polymerase subunit alpha">
    <location>
        <begin position="1"/>
        <end position="330"/>
    </location>
</feature>
<feature type="region of interest" description="Alpha N-terminal domain (alpha-NTD)" evidence="1">
    <location>
        <begin position="1"/>
        <end position="237"/>
    </location>
</feature>
<feature type="region of interest" description="Alpha C-terminal domain (alpha-CTD)" evidence="1">
    <location>
        <begin position="251"/>
        <end position="330"/>
    </location>
</feature>
<reference key="1">
    <citation type="journal article" date="2004" name="Nat. Genet.">
        <title>Evidence in the Legionella pneumophila genome for exploitation of host cell functions and high genome plasticity.</title>
        <authorList>
            <person name="Cazalet C."/>
            <person name="Rusniok C."/>
            <person name="Brueggemann H."/>
            <person name="Zidane N."/>
            <person name="Magnier A."/>
            <person name="Ma L."/>
            <person name="Tichit M."/>
            <person name="Jarraud S."/>
            <person name="Bouchier C."/>
            <person name="Vandenesch F."/>
            <person name="Kunst F."/>
            <person name="Etienne J."/>
            <person name="Glaser P."/>
            <person name="Buchrieser C."/>
        </authorList>
    </citation>
    <scope>NUCLEOTIDE SEQUENCE [LARGE SCALE GENOMIC DNA]</scope>
    <source>
        <strain>Lens</strain>
    </source>
</reference>
<dbReference type="EC" id="2.7.7.6" evidence="1"/>
<dbReference type="EMBL" id="CR628337">
    <property type="protein sequence ID" value="CAH14625.1"/>
    <property type="molecule type" value="Genomic_DNA"/>
</dbReference>
<dbReference type="RefSeq" id="WP_010946103.1">
    <property type="nucleotide sequence ID" value="NC_006369.1"/>
</dbReference>
<dbReference type="SMR" id="Q5WZI7"/>
<dbReference type="KEGG" id="lpf:lpl0395"/>
<dbReference type="LegioList" id="lpl0395"/>
<dbReference type="HOGENOM" id="CLU_053084_0_0_6"/>
<dbReference type="Proteomes" id="UP000002517">
    <property type="component" value="Chromosome"/>
</dbReference>
<dbReference type="GO" id="GO:0005737">
    <property type="term" value="C:cytoplasm"/>
    <property type="evidence" value="ECO:0007669"/>
    <property type="project" value="UniProtKB-ARBA"/>
</dbReference>
<dbReference type="GO" id="GO:0000428">
    <property type="term" value="C:DNA-directed RNA polymerase complex"/>
    <property type="evidence" value="ECO:0007669"/>
    <property type="project" value="UniProtKB-KW"/>
</dbReference>
<dbReference type="GO" id="GO:0003677">
    <property type="term" value="F:DNA binding"/>
    <property type="evidence" value="ECO:0007669"/>
    <property type="project" value="UniProtKB-UniRule"/>
</dbReference>
<dbReference type="GO" id="GO:0003899">
    <property type="term" value="F:DNA-directed RNA polymerase activity"/>
    <property type="evidence" value="ECO:0007669"/>
    <property type="project" value="UniProtKB-UniRule"/>
</dbReference>
<dbReference type="GO" id="GO:0046983">
    <property type="term" value="F:protein dimerization activity"/>
    <property type="evidence" value="ECO:0007669"/>
    <property type="project" value="InterPro"/>
</dbReference>
<dbReference type="GO" id="GO:0006351">
    <property type="term" value="P:DNA-templated transcription"/>
    <property type="evidence" value="ECO:0007669"/>
    <property type="project" value="UniProtKB-UniRule"/>
</dbReference>
<dbReference type="CDD" id="cd06928">
    <property type="entry name" value="RNAP_alpha_NTD"/>
    <property type="match status" value="1"/>
</dbReference>
<dbReference type="FunFam" id="1.10.150.20:FF:000001">
    <property type="entry name" value="DNA-directed RNA polymerase subunit alpha"/>
    <property type="match status" value="1"/>
</dbReference>
<dbReference type="FunFam" id="2.170.120.12:FF:000001">
    <property type="entry name" value="DNA-directed RNA polymerase subunit alpha"/>
    <property type="match status" value="1"/>
</dbReference>
<dbReference type="Gene3D" id="1.10.150.20">
    <property type="entry name" value="5' to 3' exonuclease, C-terminal subdomain"/>
    <property type="match status" value="1"/>
</dbReference>
<dbReference type="Gene3D" id="2.170.120.12">
    <property type="entry name" value="DNA-directed RNA polymerase, insert domain"/>
    <property type="match status" value="1"/>
</dbReference>
<dbReference type="Gene3D" id="3.30.1360.10">
    <property type="entry name" value="RNA polymerase, RBP11-like subunit"/>
    <property type="match status" value="1"/>
</dbReference>
<dbReference type="HAMAP" id="MF_00059">
    <property type="entry name" value="RNApol_bact_RpoA"/>
    <property type="match status" value="1"/>
</dbReference>
<dbReference type="InterPro" id="IPR011262">
    <property type="entry name" value="DNA-dir_RNA_pol_insert"/>
</dbReference>
<dbReference type="InterPro" id="IPR011263">
    <property type="entry name" value="DNA-dir_RNA_pol_RpoA/D/Rpb3"/>
</dbReference>
<dbReference type="InterPro" id="IPR011773">
    <property type="entry name" value="DNA-dir_RpoA"/>
</dbReference>
<dbReference type="InterPro" id="IPR036603">
    <property type="entry name" value="RBP11-like"/>
</dbReference>
<dbReference type="InterPro" id="IPR011260">
    <property type="entry name" value="RNAP_asu_C"/>
</dbReference>
<dbReference type="InterPro" id="IPR036643">
    <property type="entry name" value="RNApol_insert_sf"/>
</dbReference>
<dbReference type="NCBIfam" id="NF003513">
    <property type="entry name" value="PRK05182.1-2"/>
    <property type="match status" value="1"/>
</dbReference>
<dbReference type="NCBIfam" id="NF003519">
    <property type="entry name" value="PRK05182.2-5"/>
    <property type="match status" value="1"/>
</dbReference>
<dbReference type="NCBIfam" id="TIGR02027">
    <property type="entry name" value="rpoA"/>
    <property type="match status" value="1"/>
</dbReference>
<dbReference type="Pfam" id="PF01000">
    <property type="entry name" value="RNA_pol_A_bac"/>
    <property type="match status" value="1"/>
</dbReference>
<dbReference type="Pfam" id="PF03118">
    <property type="entry name" value="RNA_pol_A_CTD"/>
    <property type="match status" value="1"/>
</dbReference>
<dbReference type="Pfam" id="PF01193">
    <property type="entry name" value="RNA_pol_L"/>
    <property type="match status" value="1"/>
</dbReference>
<dbReference type="SMART" id="SM00662">
    <property type="entry name" value="RPOLD"/>
    <property type="match status" value="1"/>
</dbReference>
<dbReference type="SUPFAM" id="SSF47789">
    <property type="entry name" value="C-terminal domain of RNA polymerase alpha subunit"/>
    <property type="match status" value="1"/>
</dbReference>
<dbReference type="SUPFAM" id="SSF56553">
    <property type="entry name" value="Insert subdomain of RNA polymerase alpha subunit"/>
    <property type="match status" value="1"/>
</dbReference>
<dbReference type="SUPFAM" id="SSF55257">
    <property type="entry name" value="RBP11-like subunits of RNA polymerase"/>
    <property type="match status" value="1"/>
</dbReference>
<name>RPOA_LEGPL</name>
<protein>
    <recommendedName>
        <fullName evidence="1">DNA-directed RNA polymerase subunit alpha</fullName>
        <shortName evidence="1">RNAP subunit alpha</shortName>
        <ecNumber evidence="1">2.7.7.6</ecNumber>
    </recommendedName>
    <alternativeName>
        <fullName evidence="1">RNA polymerase subunit alpha</fullName>
    </alternativeName>
    <alternativeName>
        <fullName evidence="1">Transcriptase subunit alpha</fullName>
    </alternativeName>
</protein>
<sequence>MYTEINEMLTPKVLKVQAESPYKARIVLEPLERGFGHTLGNALRRILLSSMPGSAITEASIDGVLHEYSTIEGVQEDVVDLLLNLKSVAIKLTVGNEAQITLNKEGPCQVTAGDIQLTHGQEIINPELVIANLNEKGKLNMTLKVERGIGFHNTDAFVRYHDDEIEKKTVGKLKIDNSFSPVKKVAYFVDSARVENRTDLDKLTIELETNGTIDAEEAIRISASILQRQLHAFVDMKFEESRADNKERNDFDPVLLRSVDDLELTVRSANCLKAENIHYIGDLVQRTESELLKTPNLGKKSLTEIKDVLASRSLSLGMKLENWPPASLGE</sequence>
<evidence type="ECO:0000255" key="1">
    <source>
        <dbReference type="HAMAP-Rule" id="MF_00059"/>
    </source>
</evidence>
<keyword id="KW-0240">DNA-directed RNA polymerase</keyword>
<keyword id="KW-0548">Nucleotidyltransferase</keyword>
<keyword id="KW-0804">Transcription</keyword>
<keyword id="KW-0808">Transferase</keyword>
<comment type="function">
    <text evidence="1">DNA-dependent RNA polymerase catalyzes the transcription of DNA into RNA using the four ribonucleoside triphosphates as substrates.</text>
</comment>
<comment type="catalytic activity">
    <reaction evidence="1">
        <text>RNA(n) + a ribonucleoside 5'-triphosphate = RNA(n+1) + diphosphate</text>
        <dbReference type="Rhea" id="RHEA:21248"/>
        <dbReference type="Rhea" id="RHEA-COMP:14527"/>
        <dbReference type="Rhea" id="RHEA-COMP:17342"/>
        <dbReference type="ChEBI" id="CHEBI:33019"/>
        <dbReference type="ChEBI" id="CHEBI:61557"/>
        <dbReference type="ChEBI" id="CHEBI:140395"/>
        <dbReference type="EC" id="2.7.7.6"/>
    </reaction>
</comment>
<comment type="subunit">
    <text evidence="1">Homodimer. The RNAP catalytic core consists of 2 alpha, 1 beta, 1 beta' and 1 omega subunit. When a sigma factor is associated with the core the holoenzyme is formed, which can initiate transcription.</text>
</comment>
<comment type="domain">
    <text evidence="1">The N-terminal domain is essential for RNAP assembly and basal transcription, whereas the C-terminal domain is involved in interaction with transcriptional regulators and with upstream promoter elements.</text>
</comment>
<comment type="similarity">
    <text evidence="1">Belongs to the RNA polymerase alpha chain family.</text>
</comment>
<proteinExistence type="inferred from homology"/>